<comment type="function">
    <text>This protein is one of the two subunits of integration host factor, a specific DNA-binding protein that functions in genetic recombination as well as in transcriptional and translational control.</text>
</comment>
<comment type="function">
    <text>IHF also plays a crucial role in the lysogenic life cycle of bacteriophage lambda, as it is required not only in the recombination reaction, which inserts lambda DNA into the E.coli chromosome, but also for the synthesis of int and cI repressor, two phage proteins necessary for DNA insertion and repression, respectively. The synthesis of int and cI proteins is regulated indirectly by IHF via translational control of the lambda cII protein.</text>
</comment>
<comment type="subunit">
    <text evidence="1">Heterodimer of an alpha and a beta chain.</text>
</comment>
<comment type="similarity">
    <text evidence="3">Belongs to the bacterial histone-like protein family.</text>
</comment>
<name>IHFA_SALTY</name>
<gene>
    <name type="primary">ihfA</name>
    <name type="synonym">himA</name>
    <name type="ordered locus">STM1339</name>
</gene>
<protein>
    <recommendedName>
        <fullName>Integration host factor subunit alpha</fullName>
        <shortName>IHF-alpha</shortName>
    </recommendedName>
</protein>
<proteinExistence type="inferred from homology"/>
<accession>P0A1S0</accession>
<accession>P15430</accession>
<keyword id="KW-0233">DNA recombination</keyword>
<keyword id="KW-0238">DNA-binding</keyword>
<keyword id="KW-1185">Reference proteome</keyword>
<keyword id="KW-0804">Transcription</keyword>
<keyword id="KW-0805">Transcription regulation</keyword>
<keyword id="KW-0810">Translation regulation</keyword>
<organism>
    <name type="scientific">Salmonella typhimurium (strain LT2 / SGSC1412 / ATCC 700720)</name>
    <dbReference type="NCBI Taxonomy" id="99287"/>
    <lineage>
        <taxon>Bacteria</taxon>
        <taxon>Pseudomonadati</taxon>
        <taxon>Pseudomonadota</taxon>
        <taxon>Gammaproteobacteria</taxon>
        <taxon>Enterobacterales</taxon>
        <taxon>Enterobacteriaceae</taxon>
        <taxon>Salmonella</taxon>
    </lineage>
</organism>
<sequence>MALTKAEMSEYLFDKLGLSKRDAKELVELFFEEIRRALENGEQVKLSGFGNFDLRDKNQRPGRNPKTGEDIPITARRVVTFRPGQKLKSRVENASPKEE</sequence>
<dbReference type="EMBL" id="X16739">
    <property type="protein sequence ID" value="CAA34713.1"/>
    <property type="molecule type" value="Genomic_DNA"/>
</dbReference>
<dbReference type="EMBL" id="AE006468">
    <property type="protein sequence ID" value="AAL20264.1"/>
    <property type="molecule type" value="Genomic_DNA"/>
</dbReference>
<dbReference type="PIR" id="S09608">
    <property type="entry name" value="S09608"/>
</dbReference>
<dbReference type="RefSeq" id="NP_460305.1">
    <property type="nucleotide sequence ID" value="NC_003197.2"/>
</dbReference>
<dbReference type="RefSeq" id="WP_001229266.1">
    <property type="nucleotide sequence ID" value="NC_003197.2"/>
</dbReference>
<dbReference type="SMR" id="P0A1S0"/>
<dbReference type="STRING" id="99287.STM1339"/>
<dbReference type="PaxDb" id="99287-STM1339"/>
<dbReference type="GeneID" id="1252857"/>
<dbReference type="GeneID" id="92828695"/>
<dbReference type="KEGG" id="stm:STM1339"/>
<dbReference type="PATRIC" id="fig|99287.12.peg.1422"/>
<dbReference type="HOGENOM" id="CLU_105066_1_3_6"/>
<dbReference type="OMA" id="EMLFDQV"/>
<dbReference type="PhylomeDB" id="P0A1S0"/>
<dbReference type="BioCyc" id="SENT99287:STM1339-MONOMER"/>
<dbReference type="Proteomes" id="UP000001014">
    <property type="component" value="Chromosome"/>
</dbReference>
<dbReference type="GO" id="GO:0005829">
    <property type="term" value="C:cytosol"/>
    <property type="evidence" value="ECO:0000318"/>
    <property type="project" value="GO_Central"/>
</dbReference>
<dbReference type="GO" id="GO:0003677">
    <property type="term" value="F:DNA binding"/>
    <property type="evidence" value="ECO:0000318"/>
    <property type="project" value="GO_Central"/>
</dbReference>
<dbReference type="GO" id="GO:0030527">
    <property type="term" value="F:structural constituent of chromatin"/>
    <property type="evidence" value="ECO:0007669"/>
    <property type="project" value="InterPro"/>
</dbReference>
<dbReference type="GO" id="GO:0006310">
    <property type="term" value="P:DNA recombination"/>
    <property type="evidence" value="ECO:0007669"/>
    <property type="project" value="UniProtKB-UniRule"/>
</dbReference>
<dbReference type="GO" id="GO:0009893">
    <property type="term" value="P:positive regulation of metabolic process"/>
    <property type="evidence" value="ECO:0007669"/>
    <property type="project" value="UniProtKB-ARBA"/>
</dbReference>
<dbReference type="GO" id="GO:0006355">
    <property type="term" value="P:regulation of DNA-templated transcription"/>
    <property type="evidence" value="ECO:0007669"/>
    <property type="project" value="UniProtKB-UniRule"/>
</dbReference>
<dbReference type="GO" id="GO:0006417">
    <property type="term" value="P:regulation of translation"/>
    <property type="evidence" value="ECO:0007669"/>
    <property type="project" value="UniProtKB-UniRule"/>
</dbReference>
<dbReference type="CDD" id="cd13835">
    <property type="entry name" value="IHF_A"/>
    <property type="match status" value="1"/>
</dbReference>
<dbReference type="FunFam" id="4.10.520.10:FF:000002">
    <property type="entry name" value="Integration host factor subunit alpha"/>
    <property type="match status" value="1"/>
</dbReference>
<dbReference type="Gene3D" id="4.10.520.10">
    <property type="entry name" value="IHF-like DNA-binding proteins"/>
    <property type="match status" value="1"/>
</dbReference>
<dbReference type="HAMAP" id="MF_00380">
    <property type="entry name" value="IHF_alpha"/>
    <property type="match status" value="1"/>
</dbReference>
<dbReference type="InterPro" id="IPR000119">
    <property type="entry name" value="Hist_DNA-bd"/>
</dbReference>
<dbReference type="InterPro" id="IPR020816">
    <property type="entry name" value="Histone-like_DNA-bd_CS"/>
</dbReference>
<dbReference type="InterPro" id="IPR010992">
    <property type="entry name" value="IHF-like_DNA-bd_dom_sf"/>
</dbReference>
<dbReference type="InterPro" id="IPR005684">
    <property type="entry name" value="IHF_alpha"/>
</dbReference>
<dbReference type="NCBIfam" id="TIGR00987">
    <property type="entry name" value="himA"/>
    <property type="match status" value="1"/>
</dbReference>
<dbReference type="NCBIfam" id="NF001401">
    <property type="entry name" value="PRK00285.1"/>
    <property type="match status" value="1"/>
</dbReference>
<dbReference type="PANTHER" id="PTHR33175">
    <property type="entry name" value="DNA-BINDING PROTEIN HU"/>
    <property type="match status" value="1"/>
</dbReference>
<dbReference type="PANTHER" id="PTHR33175:SF2">
    <property type="entry name" value="INTEGRATION HOST FACTOR SUBUNIT ALPHA"/>
    <property type="match status" value="1"/>
</dbReference>
<dbReference type="Pfam" id="PF00216">
    <property type="entry name" value="Bac_DNA_binding"/>
    <property type="match status" value="1"/>
</dbReference>
<dbReference type="PRINTS" id="PR01727">
    <property type="entry name" value="DNABINDINGHU"/>
</dbReference>
<dbReference type="SMART" id="SM00411">
    <property type="entry name" value="BHL"/>
    <property type="match status" value="1"/>
</dbReference>
<dbReference type="SUPFAM" id="SSF47729">
    <property type="entry name" value="IHF-like DNA-binding proteins"/>
    <property type="match status" value="1"/>
</dbReference>
<dbReference type="PROSITE" id="PS00045">
    <property type="entry name" value="HISTONE_LIKE"/>
    <property type="match status" value="1"/>
</dbReference>
<feature type="chain" id="PRO_0000105026" description="Integration host factor subunit alpha">
    <location>
        <begin position="1"/>
        <end position="99"/>
    </location>
</feature>
<feature type="region of interest" description="Disordered" evidence="2">
    <location>
        <begin position="49"/>
        <end position="75"/>
    </location>
</feature>
<feature type="sequence conflict" description="In Ref. 1; CAA34713." evidence="3" ref="1">
    <original>D</original>
    <variation>G</variation>
    <location>
        <position position="53"/>
    </location>
</feature>
<feature type="sequence conflict" description="In Ref. 1; CAA34713." evidence="3" ref="1">
    <original>N</original>
    <variation>S</variation>
    <location>
        <position position="93"/>
    </location>
</feature>
<evidence type="ECO:0000250" key="1"/>
<evidence type="ECO:0000256" key="2">
    <source>
        <dbReference type="SAM" id="MobiDB-lite"/>
    </source>
</evidence>
<evidence type="ECO:0000305" key="3"/>
<reference key="1">
    <citation type="journal article" date="1989" name="Nucleic Acids Res.">
        <title>Nucleotide sequence of the Salmonella typhimurium himA gene.</title>
        <authorList>
            <person name="Li Z.J."/>
            <person name="Hillyard D."/>
            <person name="Higgins P."/>
        </authorList>
    </citation>
    <scope>NUCLEOTIDE SEQUENCE [GENOMIC DNA]</scope>
    <source>
        <strain>LT2</strain>
    </source>
</reference>
<reference key="2">
    <citation type="journal article" date="2001" name="Nature">
        <title>Complete genome sequence of Salmonella enterica serovar Typhimurium LT2.</title>
        <authorList>
            <person name="McClelland M."/>
            <person name="Sanderson K.E."/>
            <person name="Spieth J."/>
            <person name="Clifton S.W."/>
            <person name="Latreille P."/>
            <person name="Courtney L."/>
            <person name="Porwollik S."/>
            <person name="Ali J."/>
            <person name="Dante M."/>
            <person name="Du F."/>
            <person name="Hou S."/>
            <person name="Layman D."/>
            <person name="Leonard S."/>
            <person name="Nguyen C."/>
            <person name="Scott K."/>
            <person name="Holmes A."/>
            <person name="Grewal N."/>
            <person name="Mulvaney E."/>
            <person name="Ryan E."/>
            <person name="Sun H."/>
            <person name="Florea L."/>
            <person name="Miller W."/>
            <person name="Stoneking T."/>
            <person name="Nhan M."/>
            <person name="Waterston R."/>
            <person name="Wilson R.K."/>
        </authorList>
    </citation>
    <scope>NUCLEOTIDE SEQUENCE [LARGE SCALE GENOMIC DNA]</scope>
    <source>
        <strain>LT2 / SGSC1412 / ATCC 700720</strain>
    </source>
</reference>